<reference key="1">
    <citation type="journal article" date="2001" name="Science">
        <title>Complete genome sequence of a virulent isolate of Streptococcus pneumoniae.</title>
        <authorList>
            <person name="Tettelin H."/>
            <person name="Nelson K.E."/>
            <person name="Paulsen I.T."/>
            <person name="Eisen J.A."/>
            <person name="Read T.D."/>
            <person name="Peterson S.N."/>
            <person name="Heidelberg J.F."/>
            <person name="DeBoy R.T."/>
            <person name="Haft D.H."/>
            <person name="Dodson R.J."/>
            <person name="Durkin A.S."/>
            <person name="Gwinn M.L."/>
            <person name="Kolonay J.F."/>
            <person name="Nelson W.C."/>
            <person name="Peterson J.D."/>
            <person name="Umayam L.A."/>
            <person name="White O."/>
            <person name="Salzberg S.L."/>
            <person name="Lewis M.R."/>
            <person name="Radune D."/>
            <person name="Holtzapple E.K."/>
            <person name="Khouri H.M."/>
            <person name="Wolf A.M."/>
            <person name="Utterback T.R."/>
            <person name="Hansen C.L."/>
            <person name="McDonald L.A."/>
            <person name="Feldblyum T.V."/>
            <person name="Angiuoli S.V."/>
            <person name="Dickinson T."/>
            <person name="Hickey E.K."/>
            <person name="Holt I.E."/>
            <person name="Loftus B.J."/>
            <person name="Yang F."/>
            <person name="Smith H.O."/>
            <person name="Venter J.C."/>
            <person name="Dougherty B.A."/>
            <person name="Morrison D.A."/>
            <person name="Hollingshead S.K."/>
            <person name="Fraser C.M."/>
        </authorList>
    </citation>
    <scope>NUCLEOTIDE SEQUENCE [LARGE SCALE GENOMIC DNA]</scope>
    <source>
        <strain>ATCC BAA-334 / TIGR4</strain>
    </source>
</reference>
<comment type="function">
    <text evidence="1">Catalyzes the attachment of valine to tRNA(Val). As ValRS can inadvertently accommodate and process structurally similar amino acids such as threonine, to avoid such errors, it has a 'posttransfer' editing activity that hydrolyzes mischarged Thr-tRNA(Val) in a tRNA-dependent manner.</text>
</comment>
<comment type="catalytic activity">
    <reaction evidence="1">
        <text>tRNA(Val) + L-valine + ATP = L-valyl-tRNA(Val) + AMP + diphosphate</text>
        <dbReference type="Rhea" id="RHEA:10704"/>
        <dbReference type="Rhea" id="RHEA-COMP:9672"/>
        <dbReference type="Rhea" id="RHEA-COMP:9708"/>
        <dbReference type="ChEBI" id="CHEBI:30616"/>
        <dbReference type="ChEBI" id="CHEBI:33019"/>
        <dbReference type="ChEBI" id="CHEBI:57762"/>
        <dbReference type="ChEBI" id="CHEBI:78442"/>
        <dbReference type="ChEBI" id="CHEBI:78537"/>
        <dbReference type="ChEBI" id="CHEBI:456215"/>
        <dbReference type="EC" id="6.1.1.9"/>
    </reaction>
</comment>
<comment type="subunit">
    <text evidence="1">Monomer.</text>
</comment>
<comment type="subcellular location">
    <subcellularLocation>
        <location evidence="1">Cytoplasm</location>
    </subcellularLocation>
</comment>
<comment type="domain">
    <text evidence="1">ValRS has two distinct active sites: one for aminoacylation and one for editing. The misactivated threonine is translocated from the active site to the editing site.</text>
</comment>
<comment type="domain">
    <text evidence="1">The C-terminal coiled-coil domain is crucial for aminoacylation activity.</text>
</comment>
<comment type="similarity">
    <text evidence="1">Belongs to the class-I aminoacyl-tRNA synthetase family. ValS type 1 subfamily.</text>
</comment>
<accession>Q97S45</accession>
<dbReference type="EC" id="6.1.1.9" evidence="1"/>
<dbReference type="EMBL" id="AE005672">
    <property type="protein sequence ID" value="AAK74724.1"/>
    <property type="molecule type" value="Genomic_DNA"/>
</dbReference>
<dbReference type="PIR" id="C95066">
    <property type="entry name" value="C95066"/>
</dbReference>
<dbReference type="RefSeq" id="WP_000032175.1">
    <property type="nucleotide sequence ID" value="NZ_CP155539.1"/>
</dbReference>
<dbReference type="SMR" id="Q97S45"/>
<dbReference type="PaxDb" id="170187-SP_0568"/>
<dbReference type="EnsemblBacteria" id="AAK74724">
    <property type="protein sequence ID" value="AAK74724"/>
    <property type="gene ID" value="SP_0568"/>
</dbReference>
<dbReference type="KEGG" id="spn:SP_0568"/>
<dbReference type="eggNOG" id="COG0525">
    <property type="taxonomic scope" value="Bacteria"/>
</dbReference>
<dbReference type="PhylomeDB" id="Q97S45"/>
<dbReference type="BioCyc" id="SPNE170187:G1FZB-588-MONOMER"/>
<dbReference type="Proteomes" id="UP000000585">
    <property type="component" value="Chromosome"/>
</dbReference>
<dbReference type="GO" id="GO:0005829">
    <property type="term" value="C:cytosol"/>
    <property type="evidence" value="ECO:0007669"/>
    <property type="project" value="TreeGrafter"/>
</dbReference>
<dbReference type="GO" id="GO:0002161">
    <property type="term" value="F:aminoacyl-tRNA deacylase activity"/>
    <property type="evidence" value="ECO:0007669"/>
    <property type="project" value="InterPro"/>
</dbReference>
<dbReference type="GO" id="GO:0005524">
    <property type="term" value="F:ATP binding"/>
    <property type="evidence" value="ECO:0007669"/>
    <property type="project" value="UniProtKB-UniRule"/>
</dbReference>
<dbReference type="GO" id="GO:0004832">
    <property type="term" value="F:valine-tRNA ligase activity"/>
    <property type="evidence" value="ECO:0007669"/>
    <property type="project" value="UniProtKB-UniRule"/>
</dbReference>
<dbReference type="GO" id="GO:0006438">
    <property type="term" value="P:valyl-tRNA aminoacylation"/>
    <property type="evidence" value="ECO:0007669"/>
    <property type="project" value="UniProtKB-UniRule"/>
</dbReference>
<dbReference type="CDD" id="cd07962">
    <property type="entry name" value="Anticodon_Ia_Val"/>
    <property type="match status" value="1"/>
</dbReference>
<dbReference type="CDD" id="cd00817">
    <property type="entry name" value="ValRS_core"/>
    <property type="match status" value="1"/>
</dbReference>
<dbReference type="FunFam" id="1.10.287.380:FF:000001">
    <property type="entry name" value="Valine--tRNA ligase"/>
    <property type="match status" value="1"/>
</dbReference>
<dbReference type="FunFam" id="1.10.730.10:FF:000014">
    <property type="entry name" value="Valine--tRNA ligase"/>
    <property type="match status" value="1"/>
</dbReference>
<dbReference type="FunFam" id="3.40.50.620:FF:000032">
    <property type="entry name" value="Valine--tRNA ligase"/>
    <property type="match status" value="1"/>
</dbReference>
<dbReference type="FunFam" id="3.40.50.620:FF:000098">
    <property type="entry name" value="Valine--tRNA ligase"/>
    <property type="match status" value="1"/>
</dbReference>
<dbReference type="FunFam" id="3.90.740.10:FF:000005">
    <property type="entry name" value="Valine--tRNA ligase, mitochondrial"/>
    <property type="match status" value="1"/>
</dbReference>
<dbReference type="Gene3D" id="3.40.50.620">
    <property type="entry name" value="HUPs"/>
    <property type="match status" value="2"/>
</dbReference>
<dbReference type="Gene3D" id="1.10.730.10">
    <property type="entry name" value="Isoleucyl-tRNA Synthetase, Domain 1"/>
    <property type="match status" value="1"/>
</dbReference>
<dbReference type="Gene3D" id="1.10.287.380">
    <property type="entry name" value="Valyl-tRNA synthetase, C-terminal domain"/>
    <property type="match status" value="1"/>
</dbReference>
<dbReference type="Gene3D" id="3.90.740.10">
    <property type="entry name" value="Valyl/Leucyl/Isoleucyl-tRNA synthetase, editing domain"/>
    <property type="match status" value="1"/>
</dbReference>
<dbReference type="HAMAP" id="MF_02004">
    <property type="entry name" value="Val_tRNA_synth_type1"/>
    <property type="match status" value="1"/>
</dbReference>
<dbReference type="InterPro" id="IPR001412">
    <property type="entry name" value="aa-tRNA-synth_I_CS"/>
</dbReference>
<dbReference type="InterPro" id="IPR002300">
    <property type="entry name" value="aa-tRNA-synth_Ia"/>
</dbReference>
<dbReference type="InterPro" id="IPR033705">
    <property type="entry name" value="Anticodon_Ia_Val"/>
</dbReference>
<dbReference type="InterPro" id="IPR013155">
    <property type="entry name" value="M/V/L/I-tRNA-synth_anticd-bd"/>
</dbReference>
<dbReference type="InterPro" id="IPR014729">
    <property type="entry name" value="Rossmann-like_a/b/a_fold"/>
</dbReference>
<dbReference type="InterPro" id="IPR010978">
    <property type="entry name" value="tRNA-bd_arm"/>
</dbReference>
<dbReference type="InterPro" id="IPR009080">
    <property type="entry name" value="tRNAsynth_Ia_anticodon-bd"/>
</dbReference>
<dbReference type="InterPro" id="IPR037118">
    <property type="entry name" value="Val-tRNA_synth_C_sf"/>
</dbReference>
<dbReference type="InterPro" id="IPR019499">
    <property type="entry name" value="Val-tRNA_synth_tRNA-bd"/>
</dbReference>
<dbReference type="InterPro" id="IPR009008">
    <property type="entry name" value="Val/Leu/Ile-tRNA-synth_edit"/>
</dbReference>
<dbReference type="InterPro" id="IPR002303">
    <property type="entry name" value="Valyl-tRNA_ligase"/>
</dbReference>
<dbReference type="NCBIfam" id="NF004349">
    <property type="entry name" value="PRK05729.1"/>
    <property type="match status" value="1"/>
</dbReference>
<dbReference type="NCBIfam" id="TIGR00422">
    <property type="entry name" value="valS"/>
    <property type="match status" value="1"/>
</dbReference>
<dbReference type="PANTHER" id="PTHR11946:SF93">
    <property type="entry name" value="VALINE--TRNA LIGASE, CHLOROPLASTIC_MITOCHONDRIAL 2"/>
    <property type="match status" value="1"/>
</dbReference>
<dbReference type="PANTHER" id="PTHR11946">
    <property type="entry name" value="VALYL-TRNA SYNTHETASES"/>
    <property type="match status" value="1"/>
</dbReference>
<dbReference type="Pfam" id="PF08264">
    <property type="entry name" value="Anticodon_1"/>
    <property type="match status" value="1"/>
</dbReference>
<dbReference type="Pfam" id="PF00133">
    <property type="entry name" value="tRNA-synt_1"/>
    <property type="match status" value="2"/>
</dbReference>
<dbReference type="Pfam" id="PF10458">
    <property type="entry name" value="Val_tRNA-synt_C"/>
    <property type="match status" value="1"/>
</dbReference>
<dbReference type="PRINTS" id="PR00986">
    <property type="entry name" value="TRNASYNTHVAL"/>
</dbReference>
<dbReference type="SUPFAM" id="SSF47323">
    <property type="entry name" value="Anticodon-binding domain of a subclass of class I aminoacyl-tRNA synthetases"/>
    <property type="match status" value="1"/>
</dbReference>
<dbReference type="SUPFAM" id="SSF52374">
    <property type="entry name" value="Nucleotidylyl transferase"/>
    <property type="match status" value="1"/>
</dbReference>
<dbReference type="SUPFAM" id="SSF46589">
    <property type="entry name" value="tRNA-binding arm"/>
    <property type="match status" value="1"/>
</dbReference>
<dbReference type="SUPFAM" id="SSF50677">
    <property type="entry name" value="ValRS/IleRS/LeuRS editing domain"/>
    <property type="match status" value="1"/>
</dbReference>
<dbReference type="PROSITE" id="PS00178">
    <property type="entry name" value="AA_TRNA_LIGASE_I"/>
    <property type="match status" value="1"/>
</dbReference>
<evidence type="ECO:0000255" key="1">
    <source>
        <dbReference type="HAMAP-Rule" id="MF_02004"/>
    </source>
</evidence>
<proteinExistence type="inferred from homology"/>
<gene>
    <name evidence="1" type="primary">valS</name>
    <name type="ordered locus">SP_0568</name>
</gene>
<keyword id="KW-0030">Aminoacyl-tRNA synthetase</keyword>
<keyword id="KW-0067">ATP-binding</keyword>
<keyword id="KW-0175">Coiled coil</keyword>
<keyword id="KW-0963">Cytoplasm</keyword>
<keyword id="KW-0436">Ligase</keyword>
<keyword id="KW-0547">Nucleotide-binding</keyword>
<keyword id="KW-0648">Protein biosynthesis</keyword>
<keyword id="KW-1185">Reference proteome</keyword>
<protein>
    <recommendedName>
        <fullName evidence="1">Valine--tRNA ligase</fullName>
        <ecNumber evidence="1">6.1.1.9</ecNumber>
    </recommendedName>
    <alternativeName>
        <fullName evidence="1">Valyl-tRNA synthetase</fullName>
        <shortName evidence="1">ValRS</shortName>
    </alternativeName>
</protein>
<sequence>MSKELSPKYNPAEVEAGRYQKWLDADVFKPSGDQKAKPYSIVIPPPNVTGKLHLGHAWDTTLQDIIIRQKRMQGFDTLWLPGMDHAGIATQAKVEERLRGEGITRYDLGRESFLTKVWEWKDEYATTIKEQWGKMGLSVDYSRERFTLDEGLSKAVRKVFVNLYKKGWIYRGEFIINWDPAARTALSDIEVIHKDVEGAFYHMNYMLEDGSRALEVATTRPETMFGDVAVAVNPEDPRYKDLIGKNVILPIANKLIPIVGDEHADPELGTGVVKITPAHDPNDFLVGQRHNLPQVNVMNDDGTMNELAFEFSGMDRFEARKAVVAKLEEIGALVKIEKRVHSVGHSERTGVVVEPRLSTQWFVKMDQLAKNAIANQDTEDKVEFYPPRFNDTFLQWMENVHDWVISRQLWWGHQIPAWYNADGEMYVGEEAPEGDGWTQDEDVLDTWFSSALWPFSTMGWPEVDSEDFKRYFPTSTLVTGYDIIFFWVSRMIFQSLEFTGRQPFQNVLIHGLIRDEQGRKMSKSLGNGIDPMDVIEKYGADALRWFLSNGSAPGQDVRFSYEKMDASWNFINKIWNISRYILMNNEGLTLDVAHDNVTKVATGEAGNVTDRWILHNLNETIAKVTENFDKFEFGVAGHILYNFIWEEFANWYVELTKEVLYSDNEDDKVITRSVLLYTLDKILRLLHPIMPFVTEEIFGQISEGSIVTAAYPTVNLAFEDLAAHTGVESLKDLIRAVRNARAEVNVAPSKPITILVKTSDSDLEAFFNSNVNYIKRFTNPEHLEIASTIPAPELAMSSVITGAEIYLPLADLLNVEEELARLDKELAKWQKELDMVGKKLSNERFVANAKPEVVQKECDKQADYQAKYDATVARIDEMKKLVK</sequence>
<name>SYV_STRPN</name>
<organism>
    <name type="scientific">Streptococcus pneumoniae serotype 4 (strain ATCC BAA-334 / TIGR4)</name>
    <dbReference type="NCBI Taxonomy" id="170187"/>
    <lineage>
        <taxon>Bacteria</taxon>
        <taxon>Bacillati</taxon>
        <taxon>Bacillota</taxon>
        <taxon>Bacilli</taxon>
        <taxon>Lactobacillales</taxon>
        <taxon>Streptococcaceae</taxon>
        <taxon>Streptococcus</taxon>
    </lineage>
</organism>
<feature type="chain" id="PRO_0000224574" description="Valine--tRNA ligase">
    <location>
        <begin position="1"/>
        <end position="883"/>
    </location>
</feature>
<feature type="coiled-coil region" evidence="1">
    <location>
        <begin position="809"/>
        <end position="883"/>
    </location>
</feature>
<feature type="short sequence motif" description="'HIGH' region">
    <location>
        <begin position="46"/>
        <end position="56"/>
    </location>
</feature>
<feature type="short sequence motif" description="'KMSKS' region">
    <location>
        <begin position="520"/>
        <end position="524"/>
    </location>
</feature>
<feature type="binding site" evidence="1">
    <location>
        <position position="523"/>
    </location>
    <ligand>
        <name>ATP</name>
        <dbReference type="ChEBI" id="CHEBI:30616"/>
    </ligand>
</feature>